<reference key="1">
    <citation type="journal article" date="2001" name="Proc. Natl. Acad. Sci. U.S.A.">
        <title>Complete genomic sequence of Pasteurella multocida Pm70.</title>
        <authorList>
            <person name="May B.J."/>
            <person name="Zhang Q."/>
            <person name="Li L.L."/>
            <person name="Paustian M.L."/>
            <person name="Whittam T.S."/>
            <person name="Kapur V."/>
        </authorList>
    </citation>
    <scope>NUCLEOTIDE SEQUENCE [LARGE SCALE GENOMIC DNA]</scope>
    <source>
        <strain>Pm70</strain>
    </source>
</reference>
<protein>
    <recommendedName>
        <fullName evidence="1">D-ribose pyranase</fullName>
        <ecNumber evidence="1">5.4.99.62</ecNumber>
    </recommendedName>
</protein>
<organism>
    <name type="scientific">Pasteurella multocida (strain Pm70)</name>
    <dbReference type="NCBI Taxonomy" id="272843"/>
    <lineage>
        <taxon>Bacteria</taxon>
        <taxon>Pseudomonadati</taxon>
        <taxon>Pseudomonadota</taxon>
        <taxon>Gammaproteobacteria</taxon>
        <taxon>Pasteurellales</taxon>
        <taxon>Pasteurellaceae</taxon>
        <taxon>Pasteurella</taxon>
    </lineage>
</organism>
<name>RBSD_PASMU</name>
<sequence length="139" mass="15240">MKKTALLNAPLSQVIATLGHTDSLTICDAGLPIPKQIERVDLALSAGVPSFLQTFHAVVTEMFVERAIIAEEIKEKNPKILTALLNSLAQLEQQQGNQIEVQYVSHDMFKTYTHASKAIVRSGECSPYANIILYSGVPF</sequence>
<gene>
    <name evidence="1" type="primary">rbsD</name>
    <name type="ordered locus">PM0156</name>
</gene>
<comment type="function">
    <text evidence="1">Catalyzes the interconversion of beta-pyran and beta-furan forms of D-ribose.</text>
</comment>
<comment type="catalytic activity">
    <reaction evidence="1">
        <text>beta-D-ribopyranose = beta-D-ribofuranose</text>
        <dbReference type="Rhea" id="RHEA:25432"/>
        <dbReference type="ChEBI" id="CHEBI:27476"/>
        <dbReference type="ChEBI" id="CHEBI:47002"/>
        <dbReference type="EC" id="5.4.99.62"/>
    </reaction>
</comment>
<comment type="pathway">
    <text evidence="1">Carbohydrate metabolism; D-ribose degradation; D-ribose 5-phosphate from beta-D-ribopyranose: step 1/2.</text>
</comment>
<comment type="subunit">
    <text evidence="1">Homodecamer.</text>
</comment>
<comment type="subcellular location">
    <subcellularLocation>
        <location evidence="1">Cytoplasm</location>
    </subcellularLocation>
</comment>
<comment type="similarity">
    <text evidence="1">Belongs to the RbsD / FucU family. RbsD subfamily.</text>
</comment>
<dbReference type="EC" id="5.4.99.62" evidence="1"/>
<dbReference type="EMBL" id="AE004439">
    <property type="protein sequence ID" value="AAK02240.1"/>
    <property type="molecule type" value="Genomic_DNA"/>
</dbReference>
<dbReference type="RefSeq" id="WP_005751129.1">
    <property type="nucleotide sequence ID" value="NC_002663.1"/>
</dbReference>
<dbReference type="SMR" id="Q9CP97"/>
<dbReference type="STRING" id="272843.PM0156"/>
<dbReference type="EnsemblBacteria" id="AAK02240">
    <property type="protein sequence ID" value="AAK02240"/>
    <property type="gene ID" value="PM0156"/>
</dbReference>
<dbReference type="GeneID" id="77207504"/>
<dbReference type="KEGG" id="pmu:PM0156"/>
<dbReference type="PATRIC" id="fig|272843.6.peg.161"/>
<dbReference type="HOGENOM" id="CLU_135498_0_0_6"/>
<dbReference type="OrthoDB" id="9805009at2"/>
<dbReference type="UniPathway" id="UPA00916">
    <property type="reaction ID" value="UER00888"/>
</dbReference>
<dbReference type="Proteomes" id="UP000000809">
    <property type="component" value="Chromosome"/>
</dbReference>
<dbReference type="GO" id="GO:0005829">
    <property type="term" value="C:cytosol"/>
    <property type="evidence" value="ECO:0007669"/>
    <property type="project" value="TreeGrafter"/>
</dbReference>
<dbReference type="GO" id="GO:0062193">
    <property type="term" value="F:D-ribose pyranase activity"/>
    <property type="evidence" value="ECO:0007669"/>
    <property type="project" value="UniProtKB-EC"/>
</dbReference>
<dbReference type="GO" id="GO:0016872">
    <property type="term" value="F:intramolecular lyase activity"/>
    <property type="evidence" value="ECO:0007669"/>
    <property type="project" value="UniProtKB-UniRule"/>
</dbReference>
<dbReference type="GO" id="GO:0048029">
    <property type="term" value="F:monosaccharide binding"/>
    <property type="evidence" value="ECO:0007669"/>
    <property type="project" value="InterPro"/>
</dbReference>
<dbReference type="GO" id="GO:0019303">
    <property type="term" value="P:D-ribose catabolic process"/>
    <property type="evidence" value="ECO:0007669"/>
    <property type="project" value="UniProtKB-UniRule"/>
</dbReference>
<dbReference type="Gene3D" id="3.40.1650.10">
    <property type="entry name" value="RbsD-like domain"/>
    <property type="match status" value="1"/>
</dbReference>
<dbReference type="HAMAP" id="MF_01661">
    <property type="entry name" value="D_rib_pyranase"/>
    <property type="match status" value="1"/>
</dbReference>
<dbReference type="InterPro" id="IPR023064">
    <property type="entry name" value="D-ribose_pyranase"/>
</dbReference>
<dbReference type="InterPro" id="IPR023750">
    <property type="entry name" value="RbsD-like_sf"/>
</dbReference>
<dbReference type="InterPro" id="IPR007721">
    <property type="entry name" value="RbsD_FucU"/>
</dbReference>
<dbReference type="NCBIfam" id="NF008761">
    <property type="entry name" value="PRK11797.1"/>
    <property type="match status" value="1"/>
</dbReference>
<dbReference type="PANTHER" id="PTHR37831">
    <property type="entry name" value="D-RIBOSE PYRANASE"/>
    <property type="match status" value="1"/>
</dbReference>
<dbReference type="PANTHER" id="PTHR37831:SF1">
    <property type="entry name" value="D-RIBOSE PYRANASE"/>
    <property type="match status" value="1"/>
</dbReference>
<dbReference type="Pfam" id="PF05025">
    <property type="entry name" value="RbsD_FucU"/>
    <property type="match status" value="1"/>
</dbReference>
<dbReference type="SUPFAM" id="SSF102546">
    <property type="entry name" value="RbsD-like"/>
    <property type="match status" value="1"/>
</dbReference>
<keyword id="KW-0119">Carbohydrate metabolism</keyword>
<keyword id="KW-0963">Cytoplasm</keyword>
<keyword id="KW-0413">Isomerase</keyword>
<keyword id="KW-1185">Reference proteome</keyword>
<evidence type="ECO:0000255" key="1">
    <source>
        <dbReference type="HAMAP-Rule" id="MF_01661"/>
    </source>
</evidence>
<accession>Q9CP97</accession>
<proteinExistence type="inferred from homology"/>
<feature type="chain" id="PRO_0000346228" description="D-ribose pyranase">
    <location>
        <begin position="1"/>
        <end position="139"/>
    </location>
</feature>
<feature type="active site" description="Proton donor" evidence="1">
    <location>
        <position position="20"/>
    </location>
</feature>
<feature type="binding site" evidence="1">
    <location>
        <position position="28"/>
    </location>
    <ligand>
        <name>substrate</name>
    </ligand>
</feature>
<feature type="binding site" evidence="1">
    <location>
        <position position="106"/>
    </location>
    <ligand>
        <name>substrate</name>
    </ligand>
</feature>
<feature type="binding site" evidence="1">
    <location>
        <begin position="128"/>
        <end position="130"/>
    </location>
    <ligand>
        <name>substrate</name>
    </ligand>
</feature>